<dbReference type="EMBL" id="AY009400">
    <property type="protein sequence ID" value="AAG38660.1"/>
    <property type="molecule type" value="mRNA"/>
</dbReference>
<dbReference type="EMBL" id="AF315943">
    <property type="protein sequence ID" value="AAG45153.1"/>
    <property type="molecule type" value="Genomic_DNA"/>
</dbReference>
<dbReference type="EMBL" id="AB059569">
    <property type="protein sequence ID" value="BAB55602.1"/>
    <property type="molecule type" value="mRNA"/>
</dbReference>
<dbReference type="EMBL" id="AK024363">
    <property type="protein sequence ID" value="BAB14898.1"/>
    <property type="molecule type" value="mRNA"/>
</dbReference>
<dbReference type="EMBL" id="AK315081">
    <property type="protein sequence ID" value="BAG37548.1"/>
    <property type="molecule type" value="mRNA"/>
</dbReference>
<dbReference type="EMBL" id="AC073128">
    <property type="protein sequence ID" value="AAY24175.1"/>
    <property type="molecule type" value="Genomic_DNA"/>
</dbReference>
<dbReference type="EMBL" id="CH471063">
    <property type="protein sequence ID" value="EAW70659.1"/>
    <property type="molecule type" value="Genomic_DNA"/>
</dbReference>
<dbReference type="EMBL" id="BC052234">
    <property type="protein sequence ID" value="AAH52234.1"/>
    <property type="molecule type" value="mRNA"/>
</dbReference>
<dbReference type="CCDS" id="CCDS2426.1"/>
<dbReference type="PIR" id="JC7693">
    <property type="entry name" value="JC7693"/>
</dbReference>
<dbReference type="RefSeq" id="NP_079492.2">
    <property type="nucleotide sequence ID" value="NM_025216.2"/>
</dbReference>
<dbReference type="SMR" id="Q9GZT5"/>
<dbReference type="BioGRID" id="123238">
    <property type="interactions" value="43"/>
</dbReference>
<dbReference type="FunCoup" id="Q9GZT5">
    <property type="interactions" value="655"/>
</dbReference>
<dbReference type="IntAct" id="Q9GZT5">
    <property type="interactions" value="36"/>
</dbReference>
<dbReference type="STRING" id="9606.ENSP00000258411"/>
<dbReference type="GlyCosmos" id="Q9GZT5">
    <property type="glycosylation" value="3 sites, 1 glycan"/>
</dbReference>
<dbReference type="GlyGen" id="Q9GZT5">
    <property type="glycosylation" value="4 sites, 2 O-linked glycans (2 sites)"/>
</dbReference>
<dbReference type="iPTMnet" id="Q9GZT5"/>
<dbReference type="PhosphoSitePlus" id="Q9GZT5"/>
<dbReference type="BioMuta" id="WNT10A"/>
<dbReference type="DMDM" id="14424011"/>
<dbReference type="MassIVE" id="Q9GZT5"/>
<dbReference type="PaxDb" id="9606-ENSP00000258411"/>
<dbReference type="PeptideAtlas" id="Q9GZT5"/>
<dbReference type="ProteomicsDB" id="80132"/>
<dbReference type="Antibodypedia" id="2463">
    <property type="antibodies" value="193 antibodies from 34 providers"/>
</dbReference>
<dbReference type="DNASU" id="80326"/>
<dbReference type="Ensembl" id="ENST00000258411.8">
    <property type="protein sequence ID" value="ENSP00000258411.3"/>
    <property type="gene ID" value="ENSG00000135925.9"/>
</dbReference>
<dbReference type="GeneID" id="80326"/>
<dbReference type="KEGG" id="hsa:80326"/>
<dbReference type="MANE-Select" id="ENST00000258411.8">
    <property type="protein sequence ID" value="ENSP00000258411.3"/>
    <property type="RefSeq nucleotide sequence ID" value="NM_025216.3"/>
    <property type="RefSeq protein sequence ID" value="NP_079492.2"/>
</dbReference>
<dbReference type="UCSC" id="uc002vjd.2">
    <property type="organism name" value="human"/>
</dbReference>
<dbReference type="AGR" id="HGNC:13829"/>
<dbReference type="CTD" id="80326"/>
<dbReference type="DisGeNET" id="80326"/>
<dbReference type="GeneCards" id="WNT10A"/>
<dbReference type="GeneReviews" id="WNT10A"/>
<dbReference type="HGNC" id="HGNC:13829">
    <property type="gene designation" value="WNT10A"/>
</dbReference>
<dbReference type="HPA" id="ENSG00000135925">
    <property type="expression patterns" value="Tissue enhanced (esophagus, skin)"/>
</dbReference>
<dbReference type="MalaCards" id="WNT10A"/>
<dbReference type="MIM" id="150400">
    <property type="type" value="phenotype"/>
</dbReference>
<dbReference type="MIM" id="224750">
    <property type="type" value="phenotype"/>
</dbReference>
<dbReference type="MIM" id="257980">
    <property type="type" value="phenotype"/>
</dbReference>
<dbReference type="MIM" id="606268">
    <property type="type" value="gene"/>
</dbReference>
<dbReference type="neXtProt" id="NX_Q9GZT5"/>
<dbReference type="OpenTargets" id="ENSG00000135925"/>
<dbReference type="Orphanet" id="248">
    <property type="disease" value="Autosomal recessive hypohidrotic ectodermal dysplasia"/>
</dbReference>
<dbReference type="Orphanet" id="2721">
    <property type="disease" value="Odonto-onycho-dermal dysplasia"/>
</dbReference>
<dbReference type="Orphanet" id="99798">
    <property type="disease" value="Oligodontia"/>
</dbReference>
<dbReference type="Orphanet" id="50944">
    <property type="disease" value="Schoepf-Schulz-Passarge syndrome"/>
</dbReference>
<dbReference type="PharmGKB" id="PA37817"/>
<dbReference type="VEuPathDB" id="HostDB:ENSG00000135925"/>
<dbReference type="eggNOG" id="KOG3913">
    <property type="taxonomic scope" value="Eukaryota"/>
</dbReference>
<dbReference type="GeneTree" id="ENSGT00940000160299"/>
<dbReference type="HOGENOM" id="CLU_033039_1_3_1"/>
<dbReference type="InParanoid" id="Q9GZT5"/>
<dbReference type="OMA" id="ATCLMSN"/>
<dbReference type="OrthoDB" id="5945655at2759"/>
<dbReference type="PAN-GO" id="Q9GZT5">
    <property type="GO annotations" value="6 GO annotations based on evolutionary models"/>
</dbReference>
<dbReference type="PhylomeDB" id="Q9GZT5"/>
<dbReference type="TreeFam" id="TF105310"/>
<dbReference type="PathwayCommons" id="Q9GZT5"/>
<dbReference type="Reactome" id="R-HSA-3238698">
    <property type="pathway name" value="WNT ligand biogenesis and trafficking"/>
</dbReference>
<dbReference type="Reactome" id="R-HSA-373080">
    <property type="pathway name" value="Class B/2 (Secretin family receptors)"/>
</dbReference>
<dbReference type="SignaLink" id="Q9GZT5"/>
<dbReference type="SIGNOR" id="Q9GZT5"/>
<dbReference type="BioGRID-ORCS" id="80326">
    <property type="hits" value="9 hits in 1151 CRISPR screens"/>
</dbReference>
<dbReference type="ChiTaRS" id="WNT10A">
    <property type="organism name" value="human"/>
</dbReference>
<dbReference type="GeneWiki" id="WNT10A"/>
<dbReference type="GenomeRNAi" id="80326"/>
<dbReference type="Pharos" id="Q9GZT5">
    <property type="development level" value="Tbio"/>
</dbReference>
<dbReference type="PRO" id="PR:Q9GZT5"/>
<dbReference type="Proteomes" id="UP000005640">
    <property type="component" value="Chromosome 2"/>
</dbReference>
<dbReference type="RNAct" id="Q9GZT5">
    <property type="molecule type" value="protein"/>
</dbReference>
<dbReference type="Bgee" id="ENSG00000135925">
    <property type="expression patterns" value="Expressed in primordial germ cell in gonad and 97 other cell types or tissues"/>
</dbReference>
<dbReference type="ExpressionAtlas" id="Q9GZT5">
    <property type="expression patterns" value="baseline and differential"/>
</dbReference>
<dbReference type="GO" id="GO:0005576">
    <property type="term" value="C:extracellular region"/>
    <property type="evidence" value="ECO:0000304"/>
    <property type="project" value="Reactome"/>
</dbReference>
<dbReference type="GO" id="GO:0005615">
    <property type="term" value="C:extracellular space"/>
    <property type="evidence" value="ECO:0000318"/>
    <property type="project" value="GO_Central"/>
</dbReference>
<dbReference type="GO" id="GO:0005125">
    <property type="term" value="F:cytokine activity"/>
    <property type="evidence" value="ECO:0000318"/>
    <property type="project" value="GO_Central"/>
</dbReference>
<dbReference type="GO" id="GO:0005109">
    <property type="term" value="F:frizzled binding"/>
    <property type="evidence" value="ECO:0000318"/>
    <property type="project" value="GO_Central"/>
</dbReference>
<dbReference type="GO" id="GO:0048018">
    <property type="term" value="F:receptor ligand activity"/>
    <property type="evidence" value="ECO:0000314"/>
    <property type="project" value="WormBase"/>
</dbReference>
<dbReference type="GO" id="GO:0060070">
    <property type="term" value="P:canonical Wnt signaling pathway"/>
    <property type="evidence" value="ECO:0000314"/>
    <property type="project" value="WormBase"/>
</dbReference>
<dbReference type="GO" id="GO:0045165">
    <property type="term" value="P:cell fate commitment"/>
    <property type="evidence" value="ECO:0000318"/>
    <property type="project" value="GO_Central"/>
</dbReference>
<dbReference type="GO" id="GO:0071560">
    <property type="term" value="P:cellular response to transforming growth factor beta stimulus"/>
    <property type="evidence" value="ECO:0000270"/>
    <property type="project" value="UniProtKB"/>
</dbReference>
<dbReference type="GO" id="GO:0048730">
    <property type="term" value="P:epidermis morphogenesis"/>
    <property type="evidence" value="ECO:0000315"/>
    <property type="project" value="BHF-UCL"/>
</dbReference>
<dbReference type="GO" id="GO:0001942">
    <property type="term" value="P:hair follicle development"/>
    <property type="evidence" value="ECO:0000315"/>
    <property type="project" value="BHF-UCL"/>
</dbReference>
<dbReference type="GO" id="GO:0031069">
    <property type="term" value="P:hair follicle morphogenesis"/>
    <property type="evidence" value="ECO:0000315"/>
    <property type="project" value="BHF-UCL"/>
</dbReference>
<dbReference type="GO" id="GO:0014033">
    <property type="term" value="P:neural crest cell differentiation"/>
    <property type="evidence" value="ECO:0007669"/>
    <property type="project" value="Ensembl"/>
</dbReference>
<dbReference type="GO" id="GO:0030182">
    <property type="term" value="P:neuron differentiation"/>
    <property type="evidence" value="ECO:0000318"/>
    <property type="project" value="GO_Central"/>
</dbReference>
<dbReference type="GO" id="GO:0042476">
    <property type="term" value="P:odontogenesis"/>
    <property type="evidence" value="ECO:0000315"/>
    <property type="project" value="BHF-UCL"/>
</dbReference>
<dbReference type="GO" id="GO:0010628">
    <property type="term" value="P:positive regulation of gene expression"/>
    <property type="evidence" value="ECO:0007669"/>
    <property type="project" value="Ensembl"/>
</dbReference>
<dbReference type="GO" id="GO:0042487">
    <property type="term" value="P:regulation of odontogenesis of dentin-containing tooth"/>
    <property type="evidence" value="ECO:0007669"/>
    <property type="project" value="Ensembl"/>
</dbReference>
<dbReference type="GO" id="GO:0048733">
    <property type="term" value="P:sebaceous gland development"/>
    <property type="evidence" value="ECO:0000315"/>
    <property type="project" value="BHF-UCL"/>
</dbReference>
<dbReference type="GO" id="GO:0043588">
    <property type="term" value="P:skin development"/>
    <property type="evidence" value="ECO:0000315"/>
    <property type="project" value="BHF-UCL"/>
</dbReference>
<dbReference type="GO" id="GO:0043586">
    <property type="term" value="P:tongue development"/>
    <property type="evidence" value="ECO:0000315"/>
    <property type="project" value="BHF-UCL"/>
</dbReference>
<dbReference type="FunFam" id="3.30.2460.20:FF:000001">
    <property type="entry name" value="Wnt homolog"/>
    <property type="match status" value="1"/>
</dbReference>
<dbReference type="Gene3D" id="3.30.2460.20">
    <property type="match status" value="1"/>
</dbReference>
<dbReference type="InterPro" id="IPR005817">
    <property type="entry name" value="Wnt"/>
</dbReference>
<dbReference type="InterPro" id="IPR013302">
    <property type="entry name" value="Wnt10"/>
</dbReference>
<dbReference type="InterPro" id="IPR043158">
    <property type="entry name" value="Wnt_C"/>
</dbReference>
<dbReference type="InterPro" id="IPR018161">
    <property type="entry name" value="Wnt_CS"/>
</dbReference>
<dbReference type="PANTHER" id="PTHR12027:SF89">
    <property type="entry name" value="PROTEIN WNT-10A"/>
    <property type="match status" value="1"/>
</dbReference>
<dbReference type="PANTHER" id="PTHR12027">
    <property type="entry name" value="WNT RELATED"/>
    <property type="match status" value="1"/>
</dbReference>
<dbReference type="Pfam" id="PF00110">
    <property type="entry name" value="wnt"/>
    <property type="match status" value="1"/>
</dbReference>
<dbReference type="PRINTS" id="PR01893">
    <property type="entry name" value="WNT10PROTEIN"/>
</dbReference>
<dbReference type="PRINTS" id="PR01349">
    <property type="entry name" value="WNTPROTEIN"/>
</dbReference>
<dbReference type="SMART" id="SM00097">
    <property type="entry name" value="WNT1"/>
    <property type="match status" value="1"/>
</dbReference>
<dbReference type="PROSITE" id="PS00246">
    <property type="entry name" value="WNT1"/>
    <property type="match status" value="1"/>
</dbReference>
<comment type="function">
    <text evidence="5 8 21 22 25">Ligand for members of the frizzled family of seven transmembrane receptors (Probable). Functions in the canonical Wnt/beta-catenin signaling pathway (By similarity). Plays a role in normal ectoderm development (PubMed:17847007, PubMed:28589954). Required for normal tooth development (PubMed:17847007, PubMed:28589954, PubMed:29178643). Required for normal postnatal development and maintenance of tongue papillae and sweat ducts (PubMed:28589954). Required for normal proliferation of basal cells in tongue filiform papillae, plantar epithelium and sweat ducts. Required for normal expression of keratins in tongue papillae (By similarity). Required for normal expression of KRT9 in foot plant epithelium (PubMed:28589954). Required for normal hair follicle function (PubMed:28589954).</text>
</comment>
<comment type="subunit">
    <text>Forms a soluble 1:1 complex with AFM; this prevents oligomerization and is required for prolonged biological activity (PubMed:26902720). The complex with AFM may represent the physiological form in body fluids (PubMed:26902720).</text>
</comment>
<comment type="subcellular location">
    <subcellularLocation>
        <location evidence="25">Secreted</location>
        <location evidence="25">Extracellular space</location>
        <location evidence="25">Extracellular matrix</location>
    </subcellularLocation>
    <subcellularLocation>
        <location evidence="19">Secreted</location>
    </subcellularLocation>
</comment>
<comment type="PTM">
    <text evidence="2 4">Palmitoleoylation is required for efficient binding to frizzled receptors. Depalmitoleoylation leads to Wnt signaling pathway inhibition.</text>
</comment>
<comment type="disease" evidence="8 9 10 18 21">
    <disease id="DI-00882">
        <name>Odonto-onycho-dermal dysplasia</name>
        <acronym>OODD</acronym>
        <description>A rare autosomal recessive ectodermal dysplasia characterized by dry hair, severe hypodontia, smooth tongue with marked reduction of fungiform and filiform papillae, onychodysplasia, keratoderma and hyperhidrosis of palms and soles, and hyperkeratosis of the skin.</description>
        <dbReference type="MIM" id="257980"/>
    </disease>
    <text>The disease is caused by variants affecting the gene represented in this entry.</text>
</comment>
<comment type="disease" evidence="10 12">
    <disease id="DI-02494">
        <name>Schopf-Schulz-Passarge syndrome</name>
        <acronym>SSPS</acronym>
        <description>A rare ectodermal dysplasia, characterized chiefly by cysts of the eyelid margins, palmoplantar keratoderma, hypodontia, hypotrichosis and nail dystrophy. Multiple eyelid apocrine hidrocystomas are the hallmark of this condition, although they usually appear in adulthood. The concomitant presence of eccrine syringofibroadenoma in most patients and of other adnexal skin tumors in some affected subjects indicates that Schopf-Schulz-Passarge syndrome is a genodermatosis with skin appendage neoplasms.</description>
        <dbReference type="MIM" id="224750"/>
    </disease>
    <text>The disease is caused by variants affecting the gene represented in this entry.</text>
</comment>
<comment type="disease" evidence="11 13 14 15 16 17 20 22 23 24">
    <disease id="DI-03619">
        <name>Tooth agenesis, selective, 4</name>
        <acronym>STHAG4</acronym>
        <description>A form of selective tooth agenesis, a common anomaly characterized by the congenital absence of one or more teeth. Selective tooth agenesis without associated systemic disorders has sometimes been divided into 2 types: oligodontia, defined as agenesis of 6 or more permanent teeth, and hypodontia, defined as agenesis of less than 6 teeth. The number in both cases does not include absence of third molars (wisdom teeth). In STHAG4, the upper lateral incisors are absent or peg-shaped. Some STHAG4 patients manifest mild features of ectodermal dysplasia, including sparse hair, sparse eyebrows, short eyelashes, abnormalities of the nails, sweating anomalies and dry skin. STHAG4 inheritance is autosomal dominant or autosomal recessive.</description>
        <dbReference type="MIM" id="150400"/>
    </disease>
    <text>The disease is caused by variants affecting the gene represented in this entry.</text>
</comment>
<comment type="similarity">
    <text evidence="25">Belongs to the Wnt family.</text>
</comment>
<proteinExistence type="evidence at protein level"/>
<feature type="signal peptide" evidence="6">
    <location>
        <begin position="1"/>
        <end position="35"/>
    </location>
</feature>
<feature type="chain" id="PRO_0000041460" description="Protein Wnt-10a">
    <location>
        <begin position="36"/>
        <end position="417"/>
    </location>
</feature>
<feature type="region of interest" description="Disordered" evidence="7">
    <location>
        <begin position="300"/>
        <end position="331"/>
    </location>
</feature>
<feature type="compositionally biased region" description="Pro residues" evidence="7">
    <location>
        <begin position="315"/>
        <end position="325"/>
    </location>
</feature>
<feature type="modified residue" description="Phosphothreonine" evidence="1">
    <location>
        <position position="59"/>
    </location>
</feature>
<feature type="lipid moiety-binding region" description="O-palmitoleoyl serine; by PORCN" evidence="4">
    <location>
        <position position="268"/>
    </location>
</feature>
<feature type="glycosylation site" description="N-linked (GlcNAc...) asparagine" evidence="6">
    <location>
        <position position="106"/>
    </location>
</feature>
<feature type="glycosylation site" description="N-linked (GlcNAc...) asparagine" evidence="6">
    <location>
        <position position="363"/>
    </location>
</feature>
<feature type="disulfide bond" evidence="3">
    <location>
        <begin position="96"/>
        <end position="107"/>
    </location>
</feature>
<feature type="disulfide bond" evidence="3">
    <location>
        <begin position="149"/>
        <end position="157"/>
    </location>
</feature>
<feature type="disulfide bond" evidence="3">
    <location>
        <begin position="159"/>
        <end position="214"/>
    </location>
</feature>
<feature type="disulfide bond" evidence="3">
    <location>
        <begin position="262"/>
        <end position="276"/>
    </location>
</feature>
<feature type="disulfide bond" evidence="3">
    <location>
        <begin position="264"/>
        <end position="271"/>
    </location>
</feature>
<feature type="disulfide bond" evidence="3">
    <location>
        <begin position="346"/>
        <end position="377"/>
    </location>
</feature>
<feature type="disulfide bond" evidence="3">
    <location>
        <begin position="362"/>
        <end position="372"/>
    </location>
</feature>
<feature type="disulfide bond" evidence="3">
    <location>
        <begin position="376"/>
        <end position="416"/>
    </location>
</feature>
<feature type="disulfide bond" evidence="3">
    <location>
        <begin position="392"/>
        <end position="407"/>
    </location>
</feature>
<feature type="disulfide bond" evidence="3">
    <location>
        <begin position="394"/>
        <end position="404"/>
    </location>
</feature>
<feature type="disulfide bond" evidence="3">
    <location>
        <begin position="399"/>
        <end position="400"/>
    </location>
</feature>
<feature type="sequence variant" id="VAR_079418" description="In STHAG4; uncertain significance; dbSNP:rs146460077." evidence="17">
    <original>R</original>
    <variation>W</variation>
    <location>
        <position position="70"/>
    </location>
</feature>
<feature type="sequence variant" id="VAR_069171" description="In STHAG4; dbSNP:rs318240759." evidence="14">
    <original>E</original>
    <variation>K</variation>
    <location>
        <position position="95"/>
    </location>
</feature>
<feature type="sequence variant" id="VAR_079419" description="In STHAG4." evidence="17">
    <location>
        <begin position="107"/>
        <end position="417"/>
    </location>
</feature>
<feature type="sequence variant" id="VAR_079420" description="In STHAG4; uncertain significance; dbSNP:rs141074983." evidence="17">
    <original>R</original>
    <variation>C</variation>
    <location>
        <position position="113"/>
    </location>
</feature>
<feature type="sequence variant" id="VAR_077446" description="In STHAG4; uncertain significance; dbSNP:rs1245189224." evidence="15">
    <original>G</original>
    <variation>S</variation>
    <location>
        <position position="126"/>
    </location>
</feature>
<feature type="sequence variant" id="VAR_062510" description="In OODD and STHAG4; dbSNP:rs121908121." evidence="10 14">
    <original>R</original>
    <variation>Q</variation>
    <location>
        <position position="128"/>
    </location>
</feature>
<feature type="sequence variant" id="VAR_077447" description="In SSPS; dbSNP:rs372993798." evidence="12">
    <original>A</original>
    <variation>T</variation>
    <location>
        <position position="131"/>
    </location>
</feature>
<feature type="sequence variant" id="VAR_077448" description="In OODD." evidence="9">
    <original>A</original>
    <variation>V</variation>
    <location>
        <position position="131"/>
    </location>
</feature>
<feature type="sequence variant" id="VAR_064837" description="In STHAG4; uncertain significance; dbSNP:rs202024965." evidence="11">
    <original>H</original>
    <variation>Y</variation>
    <location>
        <position position="143"/>
    </location>
</feature>
<feature type="sequence variant" id="VAR_064838" description="In STHAG4; uncertain significance; dbSNP:rs543063101." evidence="11 14">
    <original>V</original>
    <variation>M</variation>
    <location>
        <position position="145"/>
    </location>
</feature>
<feature type="sequence variant" id="VAR_069172" description="In STHAG4; uncertain significance; dbSNP:rs368280129." evidence="14">
    <original>R</original>
    <variation>W</variation>
    <location>
        <position position="163"/>
    </location>
</feature>
<feature type="sequence variant" id="VAR_077449" description="In STHAG4; uncertain significance; dbSNP:rs116998555." evidence="16">
    <original>R</original>
    <variation>C</variation>
    <location>
        <position position="171"/>
    </location>
</feature>
<feature type="sequence variant" id="VAR_077450" description="In STHAG4 and OODD; uncertain significance; dbSNP:rs147680216." evidence="15 16 17 18 20 22">
    <original>G</original>
    <variation>S</variation>
    <location>
        <position position="213"/>
    </location>
</feature>
<feature type="sequence variant" id="VAR_069173" description="In STHAG4; uncertain significance; dbSNP:rs146902156." evidence="13">
    <original>D</original>
    <variation>N</variation>
    <location>
        <position position="217"/>
    </location>
</feature>
<feature type="sequence variant" id="VAR_079421" description="In STHAG4; uncertain significance; dbSNP:rs149245953." evidence="17">
    <original>R</original>
    <variation>C</variation>
    <location>
        <position position="223"/>
    </location>
</feature>
<feature type="sequence variant" id="VAR_062511" description="In OODD and STHAG4; also found in patients with an unclassified form of ectodermal dysplasia; dbSNP:rs121908120." evidence="10 11 13 17 23">
    <original>F</original>
    <variation>I</variation>
    <location>
        <position position="228"/>
    </location>
</feature>
<feature type="sequence variant" id="VAR_077451" description="In SSPS; dbSNP:rs778752861." evidence="12">
    <original>G</original>
    <variation>C</variation>
    <location>
        <position position="266"/>
    </location>
</feature>
<feature type="sequence variant" id="VAR_077452" description="In STHAG4; uncertain significance; dbSNP:rs778752861." evidence="15">
    <original>G</original>
    <variation>S</variation>
    <location>
        <position position="266"/>
    </location>
</feature>
<feature type="sequence variant" id="VAR_069174" description="In STHAG4; dbSNP:rs1234227647." evidence="14">
    <original>W</original>
    <variation>C</variation>
    <location>
        <position position="277"/>
    </location>
</feature>
<feature type="sequence variant" id="VAR_086718" description="Found in a patient with dental anomalies; uncertain significance; dbSNP:rs767665930." evidence="24">
    <original>S</original>
    <variation>G</variation>
    <location>
        <position position="292"/>
    </location>
</feature>
<feature type="sequence variant" id="VAR_086719" description="In STHAG4; uncertain significance; dbSNP:rs563548971." evidence="24">
    <original>R</original>
    <variation>C</variation>
    <location>
        <position position="293"/>
    </location>
</feature>
<feature type="sequence variant" id="VAR_013239" description="In dbSNP:rs1057306.">
    <original>P</original>
    <variation>T</variation>
    <location>
        <position position="302"/>
    </location>
</feature>
<feature type="sequence variant" id="VAR_069175" description="In STHAG4; uncertain significance; dbSNP:rs745513263." evidence="14">
    <original>N</original>
    <variation>K</variation>
    <location>
        <position position="306"/>
    </location>
</feature>
<feature type="sequence variant" id="VAR_086720" description="Found in patients with dental anomalies; uncertain significance." evidence="24">
    <location>
        <begin position="347"/>
        <end position="417"/>
    </location>
</feature>
<feature type="sequence variant" id="VAR_086721" description="Found in a patient with dental anomalies; uncertain significance; dbSNP:rs978088338." evidence="24">
    <original>R</original>
    <variation>C</variation>
    <location>
        <position position="348"/>
    </location>
</feature>
<feature type="sequence variant" id="VAR_077453" description="In OODD; uncertain significance." evidence="18">
    <original>G</original>
    <variation>C</variation>
    <location>
        <position position="356"/>
    </location>
</feature>
<feature type="sequence variant" id="VAR_077454" description="In STHAG4; uncertain significance; dbSNP:rs750190755." evidence="15 22">
    <original>T</original>
    <variation>I</variation>
    <location>
        <position position="357"/>
    </location>
</feature>
<feature type="sequence variant" id="VAR_064839" description="Found in patients with an unclassified form of ectodermal dysplasia; likely pathogenic." evidence="11">
    <original>R</original>
    <variation>C</variation>
    <location>
        <position position="360"/>
    </location>
</feature>
<feature type="sequence variant" id="VAR_077455" description="In STHAG4; uncertain significance; dbSNP:rs1347556761." evidence="15">
    <original>R</original>
    <variation>C</variation>
    <location>
        <position position="379"/>
    </location>
</feature>
<feature type="sequence conflict" description="In Ref. 3; BAB55602 and 4; BAB14898." evidence="25" ref="3 4">
    <original>E</original>
    <variation>G</variation>
    <location>
        <position position="52"/>
    </location>
</feature>
<evidence type="ECO:0000250" key="1">
    <source>
        <dbReference type="UniProtKB" id="O00744"/>
    </source>
</evidence>
<evidence type="ECO:0000250" key="2">
    <source>
        <dbReference type="UniProtKB" id="P27467"/>
    </source>
</evidence>
<evidence type="ECO:0000250" key="3">
    <source>
        <dbReference type="UniProtKB" id="P28026"/>
    </source>
</evidence>
<evidence type="ECO:0000250" key="4">
    <source>
        <dbReference type="UniProtKB" id="P56704"/>
    </source>
</evidence>
<evidence type="ECO:0000250" key="5">
    <source>
        <dbReference type="UniProtKB" id="P70701"/>
    </source>
</evidence>
<evidence type="ECO:0000255" key="6"/>
<evidence type="ECO:0000256" key="7">
    <source>
        <dbReference type="SAM" id="MobiDB-lite"/>
    </source>
</evidence>
<evidence type="ECO:0000269" key="8">
    <source>
    </source>
</evidence>
<evidence type="ECO:0000269" key="9">
    <source>
    </source>
</evidence>
<evidence type="ECO:0000269" key="10">
    <source>
    </source>
</evidence>
<evidence type="ECO:0000269" key="11">
    <source>
    </source>
</evidence>
<evidence type="ECO:0000269" key="12">
    <source>
    </source>
</evidence>
<evidence type="ECO:0000269" key="13">
    <source>
    </source>
</evidence>
<evidence type="ECO:0000269" key="14">
    <source>
    </source>
</evidence>
<evidence type="ECO:0000269" key="15">
    <source>
    </source>
</evidence>
<evidence type="ECO:0000269" key="16">
    <source>
    </source>
</evidence>
<evidence type="ECO:0000269" key="17">
    <source>
    </source>
</evidence>
<evidence type="ECO:0000269" key="18">
    <source>
    </source>
</evidence>
<evidence type="ECO:0000269" key="19">
    <source>
    </source>
</evidence>
<evidence type="ECO:0000269" key="20">
    <source>
    </source>
</evidence>
<evidence type="ECO:0000269" key="21">
    <source>
    </source>
</evidence>
<evidence type="ECO:0000269" key="22">
    <source>
    </source>
</evidence>
<evidence type="ECO:0000269" key="23">
    <source>
    </source>
</evidence>
<evidence type="ECO:0000269" key="24">
    <source>
    </source>
</evidence>
<evidence type="ECO:0000305" key="25"/>
<organism>
    <name type="scientific">Homo sapiens</name>
    <name type="common">Human</name>
    <dbReference type="NCBI Taxonomy" id="9606"/>
    <lineage>
        <taxon>Eukaryota</taxon>
        <taxon>Metazoa</taxon>
        <taxon>Chordata</taxon>
        <taxon>Craniata</taxon>
        <taxon>Vertebrata</taxon>
        <taxon>Euteleostomi</taxon>
        <taxon>Mammalia</taxon>
        <taxon>Eutheria</taxon>
        <taxon>Euarchontoglires</taxon>
        <taxon>Primates</taxon>
        <taxon>Haplorrhini</taxon>
        <taxon>Catarrhini</taxon>
        <taxon>Hominidae</taxon>
        <taxon>Homo</taxon>
    </lineage>
</organism>
<accession>Q9GZT5</accession>
<accession>Q53S44</accession>
<accession>Q96TA7</accession>
<accession>Q9H7S8</accession>
<keyword id="KW-0217">Developmental protein</keyword>
<keyword id="KW-0225">Disease variant</keyword>
<keyword id="KW-1015">Disulfide bond</keyword>
<keyword id="KW-0038">Ectodermal dysplasia</keyword>
<keyword id="KW-0272">Extracellular matrix</keyword>
<keyword id="KW-0325">Glycoprotein</keyword>
<keyword id="KW-1063">Hypotrichosis</keyword>
<keyword id="KW-0449">Lipoprotein</keyword>
<keyword id="KW-1007">Palmoplantar keratoderma</keyword>
<keyword id="KW-0597">Phosphoprotein</keyword>
<keyword id="KW-1267">Proteomics identification</keyword>
<keyword id="KW-1185">Reference proteome</keyword>
<keyword id="KW-0964">Secreted</keyword>
<keyword id="KW-0732">Signal</keyword>
<keyword id="KW-0879">Wnt signaling pathway</keyword>
<gene>
    <name type="primary">WNT10A</name>
</gene>
<name>WN10A_HUMAN</name>
<sequence>MGSAHPRPWLRLRPQPQPRPALWVLLFFLLLLAAAMPRSAPNDILDLRLPPEPVLNANTVCLTLPGLSRRQMEVCVRHPDVAASAIQGIQIAIHECQHQFRDQRWNCSSLETRNKIPYESPIFSRGFRESAFAYAIAAAGVVHAVSNACALGKLKACGCDASRRGDEEAFRRKLHRLQLDALQRGKGLSHGVPEHPALPTASPGLQDSWEWGGCSPDMGFGERFSKDFLDSREPHRDIHARMRLHNNRVGRQAVMENMRRKCKCHGTSGSCQLKTCWQVTPEFRTVGALLRSRFHRATLIRPHNRNGGQLEPGPAGAPSPAPGAPGPRRRASPADLVYFEKSPDFCEREPRLDSAGTVGRLCNKSSAGSDGCGSMCCGRGHNILRQTRSERCHCRFHWCCFVVCEECRITEWVSVCK</sequence>
<reference key="1">
    <citation type="submission" date="2000-08" db="EMBL/GenBank/DDBJ databases">
        <title>Molecular cloning and characterization of six novel human WNT genes.</title>
        <authorList>
            <person name="Testa T.T."/>
            <person name="Mossakowska D.E."/>
            <person name="Carter P.S."/>
            <person name="Hu E."/>
            <person name="Zhu Y."/>
            <person name="Kelsell D.P."/>
            <person name="Murdock P.R."/>
            <person name="Herrity N.C."/>
            <person name="Lewis C.J."/>
            <person name="Cross D.A."/>
            <person name="Culbert A.A."/>
            <person name="Reith A.D."/>
            <person name="Barnes M.R."/>
        </authorList>
    </citation>
    <scope>NUCLEOTIDE SEQUENCE [MRNA]</scope>
</reference>
<reference key="2">
    <citation type="submission" date="2000-10" db="EMBL/GenBank/DDBJ databases">
        <title>Genomic sequence of the Wnt6 gene and the Wnt10a gene from human 2q35.</title>
        <authorList>
            <person name="Rump A."/>
            <person name="Hayes C."/>
            <person name="Brown S.D.M."/>
            <person name="Rosenthal A."/>
        </authorList>
    </citation>
    <scope>NUCLEOTIDE SEQUENCE [GENOMIC DNA]</scope>
</reference>
<reference key="3">
    <citation type="journal article" date="2001" name="Biochem. Biophys. Res. Commun.">
        <title>WNT10A and WNT6, clustered in human chromosome 2q35 region with head-to-tail manner, are strongly co-expressed in SW480 cells.</title>
        <authorList>
            <person name="Kirikoshi H."/>
            <person name="Sekihara H."/>
            <person name="Katoh M."/>
        </authorList>
    </citation>
    <scope>NUCLEOTIDE SEQUENCE [MRNA]</scope>
</reference>
<reference key="4">
    <citation type="journal article" date="2004" name="Nat. Genet.">
        <title>Complete sequencing and characterization of 21,243 full-length human cDNAs.</title>
        <authorList>
            <person name="Ota T."/>
            <person name="Suzuki Y."/>
            <person name="Nishikawa T."/>
            <person name="Otsuki T."/>
            <person name="Sugiyama T."/>
            <person name="Irie R."/>
            <person name="Wakamatsu A."/>
            <person name="Hayashi K."/>
            <person name="Sato H."/>
            <person name="Nagai K."/>
            <person name="Kimura K."/>
            <person name="Makita H."/>
            <person name="Sekine M."/>
            <person name="Obayashi M."/>
            <person name="Nishi T."/>
            <person name="Shibahara T."/>
            <person name="Tanaka T."/>
            <person name="Ishii S."/>
            <person name="Yamamoto J."/>
            <person name="Saito K."/>
            <person name="Kawai Y."/>
            <person name="Isono Y."/>
            <person name="Nakamura Y."/>
            <person name="Nagahari K."/>
            <person name="Murakami K."/>
            <person name="Yasuda T."/>
            <person name="Iwayanagi T."/>
            <person name="Wagatsuma M."/>
            <person name="Shiratori A."/>
            <person name="Sudo H."/>
            <person name="Hosoiri T."/>
            <person name="Kaku Y."/>
            <person name="Kodaira H."/>
            <person name="Kondo H."/>
            <person name="Sugawara M."/>
            <person name="Takahashi M."/>
            <person name="Kanda K."/>
            <person name="Yokoi T."/>
            <person name="Furuya T."/>
            <person name="Kikkawa E."/>
            <person name="Omura Y."/>
            <person name="Abe K."/>
            <person name="Kamihara K."/>
            <person name="Katsuta N."/>
            <person name="Sato K."/>
            <person name="Tanikawa M."/>
            <person name="Yamazaki M."/>
            <person name="Ninomiya K."/>
            <person name="Ishibashi T."/>
            <person name="Yamashita H."/>
            <person name="Murakawa K."/>
            <person name="Fujimori K."/>
            <person name="Tanai H."/>
            <person name="Kimata M."/>
            <person name="Watanabe M."/>
            <person name="Hiraoka S."/>
            <person name="Chiba Y."/>
            <person name="Ishida S."/>
            <person name="Ono Y."/>
            <person name="Takiguchi S."/>
            <person name="Watanabe S."/>
            <person name="Yosida M."/>
            <person name="Hotuta T."/>
            <person name="Kusano J."/>
            <person name="Kanehori K."/>
            <person name="Takahashi-Fujii A."/>
            <person name="Hara H."/>
            <person name="Tanase T.-O."/>
            <person name="Nomura Y."/>
            <person name="Togiya S."/>
            <person name="Komai F."/>
            <person name="Hara R."/>
            <person name="Takeuchi K."/>
            <person name="Arita M."/>
            <person name="Imose N."/>
            <person name="Musashino K."/>
            <person name="Yuuki H."/>
            <person name="Oshima A."/>
            <person name="Sasaki N."/>
            <person name="Aotsuka S."/>
            <person name="Yoshikawa Y."/>
            <person name="Matsunawa H."/>
            <person name="Ichihara T."/>
            <person name="Shiohata N."/>
            <person name="Sano S."/>
            <person name="Moriya S."/>
            <person name="Momiyama H."/>
            <person name="Satoh N."/>
            <person name="Takami S."/>
            <person name="Terashima Y."/>
            <person name="Suzuki O."/>
            <person name="Nakagawa S."/>
            <person name="Senoh A."/>
            <person name="Mizoguchi H."/>
            <person name="Goto Y."/>
            <person name="Shimizu F."/>
            <person name="Wakebe H."/>
            <person name="Hishigaki H."/>
            <person name="Watanabe T."/>
            <person name="Sugiyama A."/>
            <person name="Takemoto M."/>
            <person name="Kawakami B."/>
            <person name="Yamazaki M."/>
            <person name="Watanabe K."/>
            <person name="Kumagai A."/>
            <person name="Itakura S."/>
            <person name="Fukuzumi Y."/>
            <person name="Fujimori Y."/>
            <person name="Komiyama M."/>
            <person name="Tashiro H."/>
            <person name="Tanigami A."/>
            <person name="Fujiwara T."/>
            <person name="Ono T."/>
            <person name="Yamada K."/>
            <person name="Fujii Y."/>
            <person name="Ozaki K."/>
            <person name="Hirao M."/>
            <person name="Ohmori Y."/>
            <person name="Kawabata A."/>
            <person name="Hikiji T."/>
            <person name="Kobatake N."/>
            <person name="Inagaki H."/>
            <person name="Ikema Y."/>
            <person name="Okamoto S."/>
            <person name="Okitani R."/>
            <person name="Kawakami T."/>
            <person name="Noguchi S."/>
            <person name="Itoh T."/>
            <person name="Shigeta K."/>
            <person name="Senba T."/>
            <person name="Matsumura K."/>
            <person name="Nakajima Y."/>
            <person name="Mizuno T."/>
            <person name="Morinaga M."/>
            <person name="Sasaki M."/>
            <person name="Togashi T."/>
            <person name="Oyama M."/>
            <person name="Hata H."/>
            <person name="Watanabe M."/>
            <person name="Komatsu T."/>
            <person name="Mizushima-Sugano J."/>
            <person name="Satoh T."/>
            <person name="Shirai Y."/>
            <person name="Takahashi Y."/>
            <person name="Nakagawa K."/>
            <person name="Okumura K."/>
            <person name="Nagase T."/>
            <person name="Nomura N."/>
            <person name="Kikuchi H."/>
            <person name="Masuho Y."/>
            <person name="Yamashita R."/>
            <person name="Nakai K."/>
            <person name="Yada T."/>
            <person name="Nakamura Y."/>
            <person name="Ohara O."/>
            <person name="Isogai T."/>
            <person name="Sugano S."/>
        </authorList>
    </citation>
    <scope>NUCLEOTIDE SEQUENCE [LARGE SCALE MRNA]</scope>
    <source>
        <tissue>Placenta</tissue>
        <tissue>Thymus</tissue>
    </source>
</reference>
<reference key="5">
    <citation type="journal article" date="2005" name="Nature">
        <title>Generation and annotation of the DNA sequences of human chromosomes 2 and 4.</title>
        <authorList>
            <person name="Hillier L.W."/>
            <person name="Graves T.A."/>
            <person name="Fulton R.S."/>
            <person name="Fulton L.A."/>
            <person name="Pepin K.H."/>
            <person name="Minx P."/>
            <person name="Wagner-McPherson C."/>
            <person name="Layman D."/>
            <person name="Wylie K."/>
            <person name="Sekhon M."/>
            <person name="Becker M.C."/>
            <person name="Fewell G.A."/>
            <person name="Delehaunty K.D."/>
            <person name="Miner T.L."/>
            <person name="Nash W.E."/>
            <person name="Kremitzki C."/>
            <person name="Oddy L."/>
            <person name="Du H."/>
            <person name="Sun H."/>
            <person name="Bradshaw-Cordum H."/>
            <person name="Ali J."/>
            <person name="Carter J."/>
            <person name="Cordes M."/>
            <person name="Harris A."/>
            <person name="Isak A."/>
            <person name="van Brunt A."/>
            <person name="Nguyen C."/>
            <person name="Du F."/>
            <person name="Courtney L."/>
            <person name="Kalicki J."/>
            <person name="Ozersky P."/>
            <person name="Abbott S."/>
            <person name="Armstrong J."/>
            <person name="Belter E.A."/>
            <person name="Caruso L."/>
            <person name="Cedroni M."/>
            <person name="Cotton M."/>
            <person name="Davidson T."/>
            <person name="Desai A."/>
            <person name="Elliott G."/>
            <person name="Erb T."/>
            <person name="Fronick C."/>
            <person name="Gaige T."/>
            <person name="Haakenson W."/>
            <person name="Haglund K."/>
            <person name="Holmes A."/>
            <person name="Harkins R."/>
            <person name="Kim K."/>
            <person name="Kruchowski S.S."/>
            <person name="Strong C.M."/>
            <person name="Grewal N."/>
            <person name="Goyea E."/>
            <person name="Hou S."/>
            <person name="Levy A."/>
            <person name="Martinka S."/>
            <person name="Mead K."/>
            <person name="McLellan M.D."/>
            <person name="Meyer R."/>
            <person name="Randall-Maher J."/>
            <person name="Tomlinson C."/>
            <person name="Dauphin-Kohlberg S."/>
            <person name="Kozlowicz-Reilly A."/>
            <person name="Shah N."/>
            <person name="Swearengen-Shahid S."/>
            <person name="Snider J."/>
            <person name="Strong J.T."/>
            <person name="Thompson J."/>
            <person name="Yoakum M."/>
            <person name="Leonard S."/>
            <person name="Pearman C."/>
            <person name="Trani L."/>
            <person name="Radionenko M."/>
            <person name="Waligorski J.E."/>
            <person name="Wang C."/>
            <person name="Rock S.M."/>
            <person name="Tin-Wollam A.-M."/>
            <person name="Maupin R."/>
            <person name="Latreille P."/>
            <person name="Wendl M.C."/>
            <person name="Yang S.-P."/>
            <person name="Pohl C."/>
            <person name="Wallis J.W."/>
            <person name="Spieth J."/>
            <person name="Bieri T.A."/>
            <person name="Berkowicz N."/>
            <person name="Nelson J.O."/>
            <person name="Osborne J."/>
            <person name="Ding L."/>
            <person name="Meyer R."/>
            <person name="Sabo A."/>
            <person name="Shotland Y."/>
            <person name="Sinha P."/>
            <person name="Wohldmann P.E."/>
            <person name="Cook L.L."/>
            <person name="Hickenbotham M.T."/>
            <person name="Eldred J."/>
            <person name="Williams D."/>
            <person name="Jones T.A."/>
            <person name="She X."/>
            <person name="Ciccarelli F.D."/>
            <person name="Izaurralde E."/>
            <person name="Taylor J."/>
            <person name="Schmutz J."/>
            <person name="Myers R.M."/>
            <person name="Cox D.R."/>
            <person name="Huang X."/>
            <person name="McPherson J.D."/>
            <person name="Mardis E.R."/>
            <person name="Clifton S.W."/>
            <person name="Warren W.C."/>
            <person name="Chinwalla A.T."/>
            <person name="Eddy S.R."/>
            <person name="Marra M.A."/>
            <person name="Ovcharenko I."/>
            <person name="Furey T.S."/>
            <person name="Miller W."/>
            <person name="Eichler E.E."/>
            <person name="Bork P."/>
            <person name="Suyama M."/>
            <person name="Torrents D."/>
            <person name="Waterston R.H."/>
            <person name="Wilson R.K."/>
        </authorList>
    </citation>
    <scope>NUCLEOTIDE SEQUENCE [LARGE SCALE GENOMIC DNA]</scope>
</reference>
<reference key="6">
    <citation type="submission" date="2005-07" db="EMBL/GenBank/DDBJ databases">
        <authorList>
            <person name="Mural R.J."/>
            <person name="Istrail S."/>
            <person name="Sutton G."/>
            <person name="Florea L."/>
            <person name="Halpern A.L."/>
            <person name="Mobarry C.M."/>
            <person name="Lippert R."/>
            <person name="Walenz B."/>
            <person name="Shatkay H."/>
            <person name="Dew I."/>
            <person name="Miller J.R."/>
            <person name="Flanigan M.J."/>
            <person name="Edwards N.J."/>
            <person name="Bolanos R."/>
            <person name="Fasulo D."/>
            <person name="Halldorsson B.V."/>
            <person name="Hannenhalli S."/>
            <person name="Turner R."/>
            <person name="Yooseph S."/>
            <person name="Lu F."/>
            <person name="Nusskern D.R."/>
            <person name="Shue B.C."/>
            <person name="Zheng X.H."/>
            <person name="Zhong F."/>
            <person name="Delcher A.L."/>
            <person name="Huson D.H."/>
            <person name="Kravitz S.A."/>
            <person name="Mouchard L."/>
            <person name="Reinert K."/>
            <person name="Remington K.A."/>
            <person name="Clark A.G."/>
            <person name="Waterman M.S."/>
            <person name="Eichler E.E."/>
            <person name="Adams M.D."/>
            <person name="Hunkapiller M.W."/>
            <person name="Myers E.W."/>
            <person name="Venter J.C."/>
        </authorList>
    </citation>
    <scope>NUCLEOTIDE SEQUENCE [LARGE SCALE GENOMIC DNA]</scope>
</reference>
<reference key="7">
    <citation type="journal article" date="2004" name="Genome Res.">
        <title>The status, quality, and expansion of the NIH full-length cDNA project: the Mammalian Gene Collection (MGC).</title>
        <authorList>
            <consortium name="The MGC Project Team"/>
        </authorList>
    </citation>
    <scope>NUCLEOTIDE SEQUENCE [LARGE SCALE MRNA]</scope>
    <source>
        <tissue>Brain</tissue>
    </source>
</reference>
<reference key="8">
    <citation type="journal article" date="2007" name="Am. J. Hum. Genet.">
        <title>Mutation in WNT10A is associated with an autosomal recessive ectodermal dysplasia: the odonto-onycho-dermal dysplasia.</title>
        <authorList>
            <person name="Adaimy L."/>
            <person name="Chouery E."/>
            <person name="Megarbane H."/>
            <person name="Mroueh S."/>
            <person name="Delague V."/>
            <person name="Nicolas E."/>
            <person name="Belguith H."/>
            <person name="de Mazancourt P."/>
            <person name="Megarbane A."/>
        </authorList>
    </citation>
    <scope>INVOLVEMENT IN OODD</scope>
    <scope>FUNCTION</scope>
</reference>
<reference key="9">
    <citation type="journal article" date="2016" name="Elife">
        <title>Active and water-soluble form of lipidated Wnt protein is maintained by a serum glycoprotein afamin/alpha-albumin.</title>
        <authorList>
            <person name="Mihara E."/>
            <person name="Hirai H."/>
            <person name="Yamamoto H."/>
            <person name="Tamura-Kawakami K."/>
            <person name="Matano M."/>
            <person name="Kikuchi A."/>
            <person name="Sato T."/>
            <person name="Takagi J."/>
        </authorList>
    </citation>
    <scope>INTERACTION WITH AFM</scope>
    <scope>SUBCELLULAR LOCATION</scope>
</reference>
<reference key="10">
    <citation type="journal article" date="2016" name="Genes (Basel)">
        <title>Eight mutations of three genes (EDA, EDAR, and WNT10A) identified in seven hypohidrotic ectodermal dysplasia patients.</title>
        <authorList>
            <person name="Zeng B."/>
            <person name="Xiao X."/>
            <person name="Li S."/>
            <person name="Lu H."/>
            <person name="Lu J."/>
            <person name="Zhu L."/>
            <person name="Yu D."/>
            <person name="Zhao W."/>
        </authorList>
    </citation>
    <scope>INVOLVEMENT IN STHAG4</scope>
    <scope>VARIANT STHAG4 SER-213</scope>
</reference>
<reference key="11">
    <citation type="journal article" date="2009" name="Am. J. Hum. Genet.">
        <title>WNT10A mutations are a frequent cause of a broad spectrum of ectodermal dysplasias with sex-biased manifestation pattern in heterozygotes.</title>
        <authorList>
            <person name="Bohring A."/>
            <person name="Stamm T."/>
            <person name="Spaich C."/>
            <person name="Haase C."/>
            <person name="Spree K."/>
            <person name="Hehr U."/>
            <person name="Hoffmann M."/>
            <person name="Ledig S."/>
            <person name="Sel S."/>
            <person name="Wieacker P."/>
            <person name="Ropke A."/>
        </authorList>
    </citation>
    <scope>VARIANTS OODD GLN-128 AND ILE-228</scope>
    <scope>INVOLVEMENT IN SSPS</scope>
</reference>
<reference key="12">
    <citation type="journal article" date="2011" name="Hum. Mutat.">
        <title>Only four genes (EDA1, EDAR, EDARADD, and WNT10A) account for 90% of hypohidrotic/anhidrotic ectodermal dysplasia cases.</title>
        <authorList>
            <person name="Cluzeau C."/>
            <person name="Hadj-Rabia S."/>
            <person name="Jambou M."/>
            <person name="Mansour S."/>
            <person name="Guigue P."/>
            <person name="Masmoudi S."/>
            <person name="Bal E."/>
            <person name="Chassaing N."/>
            <person name="Vincent M.C."/>
            <person name="Viot G."/>
            <person name="Clauss F."/>
            <person name="Maniere M.C."/>
            <person name="Toupenay S."/>
            <person name="Le Merrer M."/>
            <person name="Lyonnet S."/>
            <person name="Cormier-Daire V."/>
            <person name="Amiel J."/>
            <person name="Faivre L."/>
            <person name="de Prost Y."/>
            <person name="Munnich A."/>
            <person name="Bonnefont J.P."/>
            <person name="Bodemer C."/>
            <person name="Smahi A."/>
        </authorList>
    </citation>
    <scope>INVOLVEMENT IN STHAG4</scope>
    <scope>VARIANTS STHAG4 TYR-143; MET-145 AND ILE-228</scope>
    <scope>VARIANT CYS-360</scope>
</reference>
<reference key="13">
    <citation type="journal article" date="2009" name="Eur. J. Hum. Genet.">
        <title>WNT10A missense mutation associated with a complete odonto-onycho-dermal dysplasia syndrome.</title>
        <authorList>
            <person name="Nawaz S."/>
            <person name="Klar J."/>
            <person name="Wajid M."/>
            <person name="Aslam M."/>
            <person name="Tariq M."/>
            <person name="Schuster J."/>
            <person name="Baig S.M."/>
            <person name="Dahl N."/>
        </authorList>
    </citation>
    <scope>VARIANT OODD VAL-131</scope>
</reference>
<reference key="14">
    <citation type="journal article" date="2011" name="Am. J. Med. Genet. A">
        <title>WNT10A and isolated hypodontia.</title>
        <authorList>
            <person name="Kantaputra P."/>
            <person name="Sripathomsawat W."/>
        </authorList>
    </citation>
    <scope>VARIANTS STHAG4 ASN-217 AND ILE-228</scope>
</reference>
<reference key="15">
    <citation type="journal article" date="2011" name="Clin. Genet.">
        <title>Two families confirm Schoepf-Schulz-Passarge syndrome as a discrete entity within the WNT10A phenotypic spectrum.</title>
        <authorList>
            <person name="Castori M."/>
            <person name="Castiglia D."/>
            <person name="Brancati F."/>
            <person name="Foglio M."/>
            <person name="Heath S."/>
            <person name="Floriddia G."/>
            <person name="Madonna S."/>
            <person name="Fischer J."/>
            <person name="Zambruno G."/>
        </authorList>
    </citation>
    <scope>VARIANTS SSPS THR-131 AND CYS-266</scope>
</reference>
<reference key="16">
    <citation type="journal article" date="2012" name="J. Med. Genet.">
        <title>Mutations in WNT10A are present in more than half of isolated hypodontia cases.</title>
        <authorList>
            <person name="van den Boogaard M.J."/>
            <person name="Creton M."/>
            <person name="Bronkhorst Y."/>
            <person name="van der Hout A."/>
            <person name="Hennekam E."/>
            <person name="Lindhout D."/>
            <person name="Cune M."/>
            <person name="Ploos van Amstel H.K."/>
        </authorList>
    </citation>
    <scope>VARIANTS STHAG4 LYS-95; GLN-128; MET-145; TRP-163; CYS-277 AND LYS-306</scope>
</reference>
<reference key="17">
    <citation type="journal article" date="2013" name="Am. J. Med. Genet. A">
        <title>Mutations in WNT10A are frequently involved in oligodontia associated with minor signs of ectodermal dysplasia.</title>
        <authorList>
            <person name="Plaisancie J."/>
            <person name="Bailleul-Forestier I."/>
            <person name="Gaston V."/>
            <person name="Vaysse F."/>
            <person name="Lacombe D."/>
            <person name="Holder-Espinasse M."/>
            <person name="Abramowicz M."/>
            <person name="Coubes C."/>
            <person name="Plessis G."/>
            <person name="Faivre L."/>
            <person name="Demeer B."/>
            <person name="Vincent-Delorme C."/>
            <person name="Dollfus H."/>
            <person name="Sigaudy S."/>
            <person name="Guillen-Navarro E."/>
            <person name="Verloes A."/>
            <person name="Jonveaux P."/>
            <person name="Martin-Coignard D."/>
            <person name="Colin E."/>
            <person name="Bieth E."/>
            <person name="Calvas P."/>
            <person name="Chassaing N."/>
        </authorList>
    </citation>
    <scope>VARIANTS STHAG4 SER-126; SER-213; SER-266; ILE-357 AND CYS-379</scope>
    <scope>FUNCTION</scope>
</reference>
<reference key="18">
    <citation type="journal article" date="2014" name="Am. J. Med. Genet. A">
        <title>WNT10A mutations account for 1/4 of population-based isolated oligodontia and show phenotypic correlations.</title>
        <authorList>
            <person name="Arzoo P.S."/>
            <person name="Klar J."/>
            <person name="Bergendal B."/>
            <person name="Norderyd J."/>
            <person name="Dahl N."/>
        </authorList>
    </citation>
    <scope>VARIANTS STHAG4 TRP-70; 107-CYS--LYS-417 DEL; CYS-113; SER-213; CYS-223 AND ILE-228</scope>
</reference>
<reference key="19">
    <citation type="journal article" date="2014" name="Am. J. Med. Genet. A">
        <title>WNT10A mutations also associated with agenesis of the maxillary permanent canines, a separate entity.</title>
        <authorList>
            <person name="Kantaputra P."/>
            <person name="Kaewgahya M."/>
            <person name="Kantaputra W."/>
        </authorList>
    </citation>
    <scope>VARIANTS STHAG4 CYS-171 AND SER-213</scope>
</reference>
<reference key="20">
    <citation type="journal article" date="2014" name="Am. J. Med. Genet. A">
        <title>Tricho-odonto-onycho-dermal dysplasia and WNT10A mutations.</title>
        <authorList>
            <person name="Kantaputra P."/>
            <person name="Kaewgahya M."/>
            <person name="Jotikasthira D."/>
            <person name="Kantaputra W."/>
        </authorList>
    </citation>
    <scope>VARIANTS OODD SER-213 AND CYS-356</scope>
</reference>
<reference key="21">
    <citation type="journal article" date="2017" name="Mol. Genet. Genomic Med.">
        <title>Role of WNT10A in failure of tooth development in humans and zebrafish.</title>
        <authorList>
            <person name="Yuan Q."/>
            <person name="Zhao M."/>
            <person name="Tandon B."/>
            <person name="Maili L."/>
            <person name="Liu X."/>
            <person name="Zhang A."/>
            <person name="Baugh E.H."/>
            <person name="Tran T."/>
            <person name="Silva R.M."/>
            <person name="Hecht J.T."/>
            <person name="Swindell E.C."/>
            <person name="Wagner D.S."/>
            <person name="Letra A."/>
        </authorList>
    </citation>
    <scope>VARIANTS STHAG4 SER-213 AND ILE-357</scope>
    <scope>FUNCTION</scope>
</reference>
<reference key="22">
    <citation type="journal article" date="2017" name="Nat. Commun.">
        <title>WNT10A mutation causes ectodermal dysplasia by impairing progenitor cell proliferation and KLF4-mediated differentiation.</title>
        <authorList>
            <person name="Xu M."/>
            <person name="Horrell J."/>
            <person name="Snitow M."/>
            <person name="Cui J."/>
            <person name="Gochnauer H."/>
            <person name="Syrett C.M."/>
            <person name="Kallish S."/>
            <person name="Seykora J.T."/>
            <person name="Liu F."/>
            <person name="Gaillard D."/>
            <person name="Katz J.P."/>
            <person name="Kaestner K.H."/>
            <person name="Levin B."/>
            <person name="Mansfield C."/>
            <person name="Douglas J.E."/>
            <person name="Cowart B.J."/>
            <person name="Tordoff M."/>
            <person name="Liu F."/>
            <person name="Zhu X."/>
            <person name="Barlow L.A."/>
            <person name="Rubin A.I."/>
            <person name="McGrath J.A."/>
            <person name="Morrisey E.E."/>
            <person name="Chu E.Y."/>
            <person name="Millar S.E."/>
        </authorList>
    </citation>
    <scope>INVOLVEMENT IN OODD</scope>
    <scope>FUNCTION</scope>
</reference>
<reference key="23">
    <citation type="journal article" date="2018" name="Hum. Genet.">
        <title>Identification of likely pathogenic and known variants in TSPEAR, LAMB3, BCOR, and WNT10A in four Turkish families with tooth agenesis.</title>
        <authorList>
            <person name="Du R."/>
            <person name="Dinckan N."/>
            <person name="Song X."/>
            <person name="Coban-Akdemir Z."/>
            <person name="Jhangiani S.N."/>
            <person name="Guven Y."/>
            <person name="Aktoren O."/>
            <person name="Kayserili H."/>
            <person name="Petty L.E."/>
            <person name="Muzny D.M."/>
            <person name="Below J.E."/>
            <person name="Boerwinkle E."/>
            <person name="Wu N."/>
            <person name="Gibbs R.A."/>
            <person name="Posey J.E."/>
            <person name="Lupski J.R."/>
            <person name="Letra A."/>
            <person name="Uyguner Z.O."/>
        </authorList>
    </citation>
    <scope>VARIANT STHAG4 ILE-228</scope>
</reference>
<reference key="24">
    <citation type="journal article" date="2022" name="Int. Dent. J.">
        <title>Novel dental anomaly-associated mutations in WNT10A protein binding sites.</title>
        <authorList>
            <person name="Kantaputra P."/>
            <person name="Jatooratthawichot P."/>
            <person name="Tantachamroon O."/>
            <person name="Nanekrungsan K."/>
            <person name="Intachai W."/>
            <person name="Olsen B."/>
            <person name="Tongsima S."/>
            <person name="Ngamphiw C."/>
            <person name="Cairns J.R.K."/>
        </authorList>
    </citation>
    <scope>VARIANT STHAG4 CYS-293</scope>
    <scope>VARIANTS GLY-292; 347-GLU--LYS-417 DEL AND CYS-348</scope>
</reference>
<protein>
    <recommendedName>
        <fullName>Protein Wnt-10a</fullName>
    </recommendedName>
</protein>